<feature type="chain" id="PRO_1000056759" description="UPF0235 protein azo3464">
    <location>
        <begin position="1"/>
        <end position="98"/>
    </location>
</feature>
<dbReference type="EMBL" id="AM406670">
    <property type="protein sequence ID" value="CAL96080.1"/>
    <property type="molecule type" value="Genomic_DNA"/>
</dbReference>
<dbReference type="RefSeq" id="WP_011767186.1">
    <property type="nucleotide sequence ID" value="NC_008702.1"/>
</dbReference>
<dbReference type="SMR" id="A1KB74"/>
<dbReference type="STRING" id="62928.azo3464"/>
<dbReference type="KEGG" id="aoa:dqs_3607"/>
<dbReference type="KEGG" id="azo:azo3464"/>
<dbReference type="eggNOG" id="COG1872">
    <property type="taxonomic scope" value="Bacteria"/>
</dbReference>
<dbReference type="HOGENOM" id="CLU_130694_5_0_4"/>
<dbReference type="OrthoDB" id="9800587at2"/>
<dbReference type="Proteomes" id="UP000002588">
    <property type="component" value="Chromosome"/>
</dbReference>
<dbReference type="GO" id="GO:0005737">
    <property type="term" value="C:cytoplasm"/>
    <property type="evidence" value="ECO:0007669"/>
    <property type="project" value="TreeGrafter"/>
</dbReference>
<dbReference type="Gene3D" id="3.30.1200.10">
    <property type="entry name" value="YggU-like"/>
    <property type="match status" value="1"/>
</dbReference>
<dbReference type="HAMAP" id="MF_00634">
    <property type="entry name" value="UPF0235"/>
    <property type="match status" value="1"/>
</dbReference>
<dbReference type="InterPro" id="IPR003746">
    <property type="entry name" value="DUF167"/>
</dbReference>
<dbReference type="InterPro" id="IPR036591">
    <property type="entry name" value="YggU-like_sf"/>
</dbReference>
<dbReference type="NCBIfam" id="TIGR00251">
    <property type="entry name" value="DUF167 family protein"/>
    <property type="match status" value="1"/>
</dbReference>
<dbReference type="PANTHER" id="PTHR13420">
    <property type="entry name" value="UPF0235 PROTEIN C15ORF40"/>
    <property type="match status" value="1"/>
</dbReference>
<dbReference type="PANTHER" id="PTHR13420:SF7">
    <property type="entry name" value="UPF0235 PROTEIN C15ORF40"/>
    <property type="match status" value="1"/>
</dbReference>
<dbReference type="Pfam" id="PF02594">
    <property type="entry name" value="DUF167"/>
    <property type="match status" value="1"/>
</dbReference>
<dbReference type="SMART" id="SM01152">
    <property type="entry name" value="DUF167"/>
    <property type="match status" value="1"/>
</dbReference>
<dbReference type="SUPFAM" id="SSF69786">
    <property type="entry name" value="YggU-like"/>
    <property type="match status" value="1"/>
</dbReference>
<keyword id="KW-1185">Reference proteome</keyword>
<comment type="similarity">
    <text evidence="1">Belongs to the UPF0235 family.</text>
</comment>
<protein>
    <recommendedName>
        <fullName evidence="1">UPF0235 protein azo3464</fullName>
    </recommendedName>
</protein>
<gene>
    <name type="ordered locus">azo3464</name>
</gene>
<organism>
    <name type="scientific">Azoarcus sp. (strain BH72)</name>
    <dbReference type="NCBI Taxonomy" id="418699"/>
    <lineage>
        <taxon>Bacteria</taxon>
        <taxon>Pseudomonadati</taxon>
        <taxon>Pseudomonadota</taxon>
        <taxon>Betaproteobacteria</taxon>
        <taxon>Rhodocyclales</taxon>
        <taxon>Zoogloeaceae</taxon>
        <taxon>Azoarcus</taxon>
    </lineage>
</organism>
<accession>A1KB74</accession>
<sequence>MADWVREAADGSLTLTLHIQPGARQTGFAGLHGEAMKIRLAAPPVDGKANAALCAFLADFCEVPKSAVTLVSGETSRAKRVRVETKTPGLAGRLRALG</sequence>
<evidence type="ECO:0000255" key="1">
    <source>
        <dbReference type="HAMAP-Rule" id="MF_00634"/>
    </source>
</evidence>
<proteinExistence type="inferred from homology"/>
<name>Y3464_AZOSB</name>
<reference key="1">
    <citation type="journal article" date="2006" name="Nat. Biotechnol.">
        <title>Complete genome of the mutualistic, N2-fixing grass endophyte Azoarcus sp. strain BH72.</title>
        <authorList>
            <person name="Krause A."/>
            <person name="Ramakumar A."/>
            <person name="Bartels D."/>
            <person name="Battistoni F."/>
            <person name="Bekel T."/>
            <person name="Boch J."/>
            <person name="Boehm M."/>
            <person name="Friedrich F."/>
            <person name="Hurek T."/>
            <person name="Krause L."/>
            <person name="Linke B."/>
            <person name="McHardy A.C."/>
            <person name="Sarkar A."/>
            <person name="Schneiker S."/>
            <person name="Syed A.A."/>
            <person name="Thauer R."/>
            <person name="Vorhoelter F.-J."/>
            <person name="Weidner S."/>
            <person name="Puehler A."/>
            <person name="Reinhold-Hurek B."/>
            <person name="Kaiser O."/>
            <person name="Goesmann A."/>
        </authorList>
    </citation>
    <scope>NUCLEOTIDE SEQUENCE [LARGE SCALE GENOMIC DNA]</scope>
    <source>
        <strain>BH72</strain>
    </source>
</reference>